<protein>
    <recommendedName>
        <fullName evidence="1">S-ribosylhomocysteine lyase</fullName>
        <ecNumber evidence="1">4.4.1.21</ecNumber>
    </recommendedName>
    <alternativeName>
        <fullName evidence="1">AI-2 synthesis protein</fullName>
    </alternativeName>
    <alternativeName>
        <fullName evidence="1">Autoinducer-2 production protein LuxS</fullName>
    </alternativeName>
</protein>
<name>LUXS_MARMS</name>
<dbReference type="EC" id="4.4.1.21" evidence="1"/>
<dbReference type="EMBL" id="CP000749">
    <property type="protein sequence ID" value="ABR70253.1"/>
    <property type="molecule type" value="Genomic_DNA"/>
</dbReference>
<dbReference type="SMR" id="A6VUX4"/>
<dbReference type="STRING" id="400668.Mmwyl1_1324"/>
<dbReference type="KEGG" id="mmw:Mmwyl1_1324"/>
<dbReference type="eggNOG" id="COG1854">
    <property type="taxonomic scope" value="Bacteria"/>
</dbReference>
<dbReference type="HOGENOM" id="CLU_107531_2_0_6"/>
<dbReference type="OrthoDB" id="9788129at2"/>
<dbReference type="GO" id="GO:0005506">
    <property type="term" value="F:iron ion binding"/>
    <property type="evidence" value="ECO:0007669"/>
    <property type="project" value="InterPro"/>
</dbReference>
<dbReference type="GO" id="GO:0043768">
    <property type="term" value="F:S-ribosylhomocysteine lyase activity"/>
    <property type="evidence" value="ECO:0007669"/>
    <property type="project" value="UniProtKB-UniRule"/>
</dbReference>
<dbReference type="GO" id="GO:0009372">
    <property type="term" value="P:quorum sensing"/>
    <property type="evidence" value="ECO:0007669"/>
    <property type="project" value="UniProtKB-UniRule"/>
</dbReference>
<dbReference type="FunFam" id="3.30.1360.80:FF:000001">
    <property type="entry name" value="S-ribosylhomocysteine lyase"/>
    <property type="match status" value="1"/>
</dbReference>
<dbReference type="Gene3D" id="3.30.1360.80">
    <property type="entry name" value="S-ribosylhomocysteinase (LuxS)"/>
    <property type="match status" value="1"/>
</dbReference>
<dbReference type="HAMAP" id="MF_00091">
    <property type="entry name" value="LuxS"/>
    <property type="match status" value="1"/>
</dbReference>
<dbReference type="InterPro" id="IPR037005">
    <property type="entry name" value="LuxS_sf"/>
</dbReference>
<dbReference type="InterPro" id="IPR011249">
    <property type="entry name" value="Metalloenz_LuxS/M16"/>
</dbReference>
<dbReference type="InterPro" id="IPR003815">
    <property type="entry name" value="S-ribosylhomocysteinase"/>
</dbReference>
<dbReference type="NCBIfam" id="NF002602">
    <property type="entry name" value="PRK02260.1-2"/>
    <property type="match status" value="1"/>
</dbReference>
<dbReference type="PANTHER" id="PTHR35799">
    <property type="entry name" value="S-RIBOSYLHOMOCYSTEINE LYASE"/>
    <property type="match status" value="1"/>
</dbReference>
<dbReference type="PANTHER" id="PTHR35799:SF1">
    <property type="entry name" value="S-RIBOSYLHOMOCYSTEINE LYASE"/>
    <property type="match status" value="1"/>
</dbReference>
<dbReference type="Pfam" id="PF02664">
    <property type="entry name" value="LuxS"/>
    <property type="match status" value="1"/>
</dbReference>
<dbReference type="PIRSF" id="PIRSF006160">
    <property type="entry name" value="AI2"/>
    <property type="match status" value="1"/>
</dbReference>
<dbReference type="PRINTS" id="PR01487">
    <property type="entry name" value="LUXSPROTEIN"/>
</dbReference>
<dbReference type="SUPFAM" id="SSF63411">
    <property type="entry name" value="LuxS/MPP-like metallohydrolase"/>
    <property type="match status" value="1"/>
</dbReference>
<sequence>MPLLDSFRVDHTRMDAPAVRVAKSMSTPKGDDITVFDLRFCVPNEEILSEKGIHTLEHLFAGFMRDHLNSNNVEIIDISPMGCRTGFYMSLIGTPSEETVAASWKAAMEDVLKVKAKSDIPELNEYQCGTYEMHSLEEAQEIAKMILDRDVKVNSNEELYLSEEFLKEHS</sequence>
<keyword id="KW-0071">Autoinducer synthesis</keyword>
<keyword id="KW-0408">Iron</keyword>
<keyword id="KW-0456">Lyase</keyword>
<keyword id="KW-0479">Metal-binding</keyword>
<keyword id="KW-0673">Quorum sensing</keyword>
<reference key="1">
    <citation type="submission" date="2007-06" db="EMBL/GenBank/DDBJ databases">
        <title>Complete sequence of Marinomonas sp. MWYL1.</title>
        <authorList>
            <consortium name="US DOE Joint Genome Institute"/>
            <person name="Copeland A."/>
            <person name="Lucas S."/>
            <person name="Lapidus A."/>
            <person name="Barry K."/>
            <person name="Glavina del Rio T."/>
            <person name="Dalin E."/>
            <person name="Tice H."/>
            <person name="Pitluck S."/>
            <person name="Kiss H."/>
            <person name="Brettin T."/>
            <person name="Bruce D."/>
            <person name="Detter J.C."/>
            <person name="Han C."/>
            <person name="Schmutz J."/>
            <person name="Larimer F."/>
            <person name="Land M."/>
            <person name="Hauser L."/>
            <person name="Kyrpides N."/>
            <person name="Kim E."/>
            <person name="Johnston A.W.B."/>
            <person name="Todd J.D."/>
            <person name="Rogers R."/>
            <person name="Wexler M."/>
            <person name="Bond P.L."/>
            <person name="Li Y."/>
            <person name="Richardson P."/>
        </authorList>
    </citation>
    <scope>NUCLEOTIDE SEQUENCE [LARGE SCALE GENOMIC DNA]</scope>
    <source>
        <strain>MWYL1</strain>
    </source>
</reference>
<organism>
    <name type="scientific">Marinomonas sp. (strain MWYL1)</name>
    <dbReference type="NCBI Taxonomy" id="400668"/>
    <lineage>
        <taxon>Bacteria</taxon>
        <taxon>Pseudomonadati</taxon>
        <taxon>Pseudomonadota</taxon>
        <taxon>Gammaproteobacteria</taxon>
        <taxon>Oceanospirillales</taxon>
        <taxon>Oceanospirillaceae</taxon>
        <taxon>Marinomonas</taxon>
    </lineage>
</organism>
<gene>
    <name evidence="1" type="primary">luxS</name>
    <name type="ordered locus">Mmwyl1_1324</name>
</gene>
<accession>A6VUX4</accession>
<proteinExistence type="inferred from homology"/>
<evidence type="ECO:0000255" key="1">
    <source>
        <dbReference type="HAMAP-Rule" id="MF_00091"/>
    </source>
</evidence>
<comment type="function">
    <text evidence="1">Involved in the synthesis of autoinducer 2 (AI-2) which is secreted by bacteria and is used to communicate both the cell density and the metabolic potential of the environment. The regulation of gene expression in response to changes in cell density is called quorum sensing. Catalyzes the transformation of S-ribosylhomocysteine (RHC) to homocysteine (HC) and 4,5-dihydroxy-2,3-pentadione (DPD).</text>
</comment>
<comment type="catalytic activity">
    <reaction evidence="1">
        <text>S-(5-deoxy-D-ribos-5-yl)-L-homocysteine = (S)-4,5-dihydroxypentane-2,3-dione + L-homocysteine</text>
        <dbReference type="Rhea" id="RHEA:17753"/>
        <dbReference type="ChEBI" id="CHEBI:29484"/>
        <dbReference type="ChEBI" id="CHEBI:58195"/>
        <dbReference type="ChEBI" id="CHEBI:58199"/>
        <dbReference type="EC" id="4.4.1.21"/>
    </reaction>
</comment>
<comment type="cofactor">
    <cofactor evidence="1">
        <name>Fe cation</name>
        <dbReference type="ChEBI" id="CHEBI:24875"/>
    </cofactor>
    <text evidence="1">Binds 1 Fe cation per subunit.</text>
</comment>
<comment type="subunit">
    <text evidence="1">Homodimer.</text>
</comment>
<comment type="similarity">
    <text evidence="1">Belongs to the LuxS family.</text>
</comment>
<feature type="chain" id="PRO_1000075455" description="S-ribosylhomocysteine lyase">
    <location>
        <begin position="1"/>
        <end position="170"/>
    </location>
</feature>
<feature type="binding site" evidence="1">
    <location>
        <position position="54"/>
    </location>
    <ligand>
        <name>Fe cation</name>
        <dbReference type="ChEBI" id="CHEBI:24875"/>
    </ligand>
</feature>
<feature type="binding site" evidence="1">
    <location>
        <position position="58"/>
    </location>
    <ligand>
        <name>Fe cation</name>
        <dbReference type="ChEBI" id="CHEBI:24875"/>
    </ligand>
</feature>
<feature type="binding site" evidence="1">
    <location>
        <position position="128"/>
    </location>
    <ligand>
        <name>Fe cation</name>
        <dbReference type="ChEBI" id="CHEBI:24875"/>
    </ligand>
</feature>